<accession>O82713</accession>
<name>RS32_QUESU</name>
<evidence type="ECO:0000256" key="1">
    <source>
        <dbReference type="SAM" id="MobiDB-lite"/>
    </source>
</evidence>
<evidence type="ECO:0000305" key="2"/>
<evidence type="ECO:0000305" key="3">
    <source ref="2"/>
</evidence>
<feature type="chain" id="PRO_0000198068" description="Small ribosomal subunit protein eS32">
    <location>
        <begin position="1"/>
        <end position="25"/>
    </location>
</feature>
<feature type="region of interest" description="Disordered" evidence="1">
    <location>
        <begin position="1"/>
        <end position="25"/>
    </location>
</feature>
<sequence>MRAKWRKKRVRRLKRKRRKTRARSK</sequence>
<dbReference type="EMBL" id="AJ001347">
    <property type="protein sequence ID" value="CAA04691.1"/>
    <property type="molecule type" value="mRNA"/>
</dbReference>
<dbReference type="SMR" id="O82713"/>
<dbReference type="GO" id="GO:1990904">
    <property type="term" value="C:ribonucleoprotein complex"/>
    <property type="evidence" value="ECO:0007669"/>
    <property type="project" value="UniProtKB-KW"/>
</dbReference>
<dbReference type="GO" id="GO:0005840">
    <property type="term" value="C:ribosome"/>
    <property type="evidence" value="ECO:0007669"/>
    <property type="project" value="UniProtKB-KW"/>
</dbReference>
<dbReference type="GO" id="GO:0003735">
    <property type="term" value="F:structural constituent of ribosome"/>
    <property type="evidence" value="ECO:0007669"/>
    <property type="project" value="InterPro"/>
</dbReference>
<dbReference type="GO" id="GO:0006412">
    <property type="term" value="P:translation"/>
    <property type="evidence" value="ECO:0007669"/>
    <property type="project" value="InterPro"/>
</dbReference>
<dbReference type="InterPro" id="IPR007836">
    <property type="entry name" value="Ribosomal_eS32"/>
</dbReference>
<dbReference type="Pfam" id="PF05162">
    <property type="entry name" value="Ribosomal_L41"/>
    <property type="match status" value="1"/>
</dbReference>
<gene>
    <name type="primary">RPL41</name>
</gene>
<organism>
    <name type="scientific">Quercus suber</name>
    <name type="common">Cork oak</name>
    <dbReference type="NCBI Taxonomy" id="58331"/>
    <lineage>
        <taxon>Eukaryota</taxon>
        <taxon>Viridiplantae</taxon>
        <taxon>Streptophyta</taxon>
        <taxon>Embryophyta</taxon>
        <taxon>Tracheophyta</taxon>
        <taxon>Spermatophyta</taxon>
        <taxon>Magnoliopsida</taxon>
        <taxon>eudicotyledons</taxon>
        <taxon>Gunneridae</taxon>
        <taxon>Pentapetalae</taxon>
        <taxon>rosids</taxon>
        <taxon>fabids</taxon>
        <taxon>Fagales</taxon>
        <taxon>Fagaceae</taxon>
        <taxon>Quercus</taxon>
    </lineage>
</organism>
<protein>
    <recommendedName>
        <fullName evidence="3">Small ribosomal subunit protein eS32</fullName>
    </recommendedName>
    <alternativeName>
        <fullName>60S ribosomal protein L41</fullName>
    </alternativeName>
    <alternativeName>
        <fullName evidence="2">Large ribosomal subunit protein eL41</fullName>
    </alternativeName>
</protein>
<reference key="1">
    <citation type="submission" date="1997-08" db="EMBL/GenBank/DDBJ databases">
        <title>Ribosomal proteins in Quercus suber.</title>
        <authorList>
            <person name="Huguet G."/>
            <person name="Pla M."/>
            <person name="Verdaguer D."/>
            <person name="Molinas M."/>
        </authorList>
    </citation>
    <scope>NUCLEOTIDE SEQUENCE [MRNA]</scope>
</reference>
<reference key="2">
    <citation type="unpublished observations" date="2023-10">
        <authorList>
            <person name="Leibundgut M.A."/>
            <person name="Ban N."/>
        </authorList>
    </citation>
    <scope>REVISION OF SUBUNIT</scope>
    <scope>NOMENCLATURE</scope>
</reference>
<proteinExistence type="evidence at protein level"/>
<keyword id="KW-0687">Ribonucleoprotein</keyword>
<keyword id="KW-0689">Ribosomal protein</keyword>
<comment type="subunit">
    <text evidence="3">Component of the small ribosomal subunit (Ref.2).</text>
</comment>
<comment type="miscellaneous">
    <text evidence="3">Initially thought to be part of the large ribosomal subunit. Crystal structures show eS32/eL41 to be a small ribosomal subunit forming a bridge at the interface of the 2 subunits.</text>
</comment>
<comment type="similarity">
    <text evidence="2">Belongs to the eukaryotic ribosomal protein eS32 family.</text>
</comment>